<comment type="function">
    <text evidence="1">NDH-1 shuttles electrons from NADH, via FMN and iron-sulfur (Fe-S) centers, to quinones in the respiratory chain. The immediate electron acceptor for the enzyme in this species is believed to be ubiquinone. Couples the redox reaction to proton translocation (for every two electrons transferred, four hydrogen ions are translocated across the cytoplasmic membrane), and thus conserves the redox energy in a proton gradient.</text>
</comment>
<comment type="catalytic activity">
    <reaction evidence="1">
        <text>a quinone + NADH + 5 H(+)(in) = a quinol + NAD(+) + 4 H(+)(out)</text>
        <dbReference type="Rhea" id="RHEA:57888"/>
        <dbReference type="ChEBI" id="CHEBI:15378"/>
        <dbReference type="ChEBI" id="CHEBI:24646"/>
        <dbReference type="ChEBI" id="CHEBI:57540"/>
        <dbReference type="ChEBI" id="CHEBI:57945"/>
        <dbReference type="ChEBI" id="CHEBI:132124"/>
    </reaction>
</comment>
<comment type="subunit">
    <text evidence="1">NDH-1 is composed of 14 different subunits. Subunits NuoA, H, J, K, L, M, N constitute the membrane sector of the complex.</text>
</comment>
<comment type="subcellular location">
    <subcellularLocation>
        <location evidence="1">Cell inner membrane</location>
        <topology evidence="1">Multi-pass membrane protein</topology>
    </subcellularLocation>
</comment>
<comment type="similarity">
    <text evidence="1">Belongs to the complex I subunit 2 family.</text>
</comment>
<keyword id="KW-0997">Cell inner membrane</keyword>
<keyword id="KW-1003">Cell membrane</keyword>
<keyword id="KW-0472">Membrane</keyword>
<keyword id="KW-0520">NAD</keyword>
<keyword id="KW-0874">Quinone</keyword>
<keyword id="KW-1278">Translocase</keyword>
<keyword id="KW-0812">Transmembrane</keyword>
<keyword id="KW-1133">Transmembrane helix</keyword>
<keyword id="KW-0813">Transport</keyword>
<keyword id="KW-0830">Ubiquinone</keyword>
<proteinExistence type="inferred from homology"/>
<organism>
    <name type="scientific">Caulobacter sp. (strain K31)</name>
    <dbReference type="NCBI Taxonomy" id="366602"/>
    <lineage>
        <taxon>Bacteria</taxon>
        <taxon>Pseudomonadati</taxon>
        <taxon>Pseudomonadota</taxon>
        <taxon>Alphaproteobacteria</taxon>
        <taxon>Caulobacterales</taxon>
        <taxon>Caulobacteraceae</taxon>
        <taxon>Caulobacter</taxon>
    </lineage>
</organism>
<evidence type="ECO:0000255" key="1">
    <source>
        <dbReference type="HAMAP-Rule" id="MF_00445"/>
    </source>
</evidence>
<accession>B0SZ35</accession>
<name>NUON_CAUSK</name>
<feature type="chain" id="PRO_0000391124" description="NADH-quinone oxidoreductase subunit N">
    <location>
        <begin position="1"/>
        <end position="483"/>
    </location>
</feature>
<feature type="transmembrane region" description="Helical" evidence="1">
    <location>
        <begin position="9"/>
        <end position="29"/>
    </location>
</feature>
<feature type="transmembrane region" description="Helical" evidence="1">
    <location>
        <begin position="35"/>
        <end position="55"/>
    </location>
</feature>
<feature type="transmembrane region" description="Helical" evidence="1">
    <location>
        <begin position="69"/>
        <end position="89"/>
    </location>
</feature>
<feature type="transmembrane region" description="Helical" evidence="1">
    <location>
        <begin position="104"/>
        <end position="124"/>
    </location>
</feature>
<feature type="transmembrane region" description="Helical" evidence="1">
    <location>
        <begin position="158"/>
        <end position="178"/>
    </location>
</feature>
<feature type="transmembrane region" description="Helical" evidence="1">
    <location>
        <begin position="201"/>
        <end position="221"/>
    </location>
</feature>
<feature type="transmembrane region" description="Helical" evidence="1">
    <location>
        <begin position="234"/>
        <end position="254"/>
    </location>
</feature>
<feature type="transmembrane region" description="Helical" evidence="1">
    <location>
        <begin position="272"/>
        <end position="292"/>
    </location>
</feature>
<feature type="transmembrane region" description="Helical" evidence="1">
    <location>
        <begin position="297"/>
        <end position="317"/>
    </location>
</feature>
<feature type="transmembrane region" description="Helical" evidence="1">
    <location>
        <begin position="325"/>
        <end position="345"/>
    </location>
</feature>
<feature type="transmembrane region" description="Helical" evidence="1">
    <location>
        <begin position="368"/>
        <end position="388"/>
    </location>
</feature>
<feature type="transmembrane region" description="Helical" evidence="1">
    <location>
        <begin position="404"/>
        <end position="424"/>
    </location>
</feature>
<feature type="transmembrane region" description="Helical" evidence="1">
    <location>
        <begin position="449"/>
        <end position="469"/>
    </location>
</feature>
<gene>
    <name evidence="1" type="primary">nuoN</name>
    <name type="ordered locus">Caul_2819</name>
</gene>
<protein>
    <recommendedName>
        <fullName evidence="1">NADH-quinone oxidoreductase subunit N</fullName>
        <ecNumber evidence="1">7.1.1.-</ecNumber>
    </recommendedName>
    <alternativeName>
        <fullName evidence="1">NADH dehydrogenase I subunit N</fullName>
    </alternativeName>
    <alternativeName>
        <fullName evidence="1">NDH-1 subunit N</fullName>
    </alternativeName>
</protein>
<dbReference type="EC" id="7.1.1.-" evidence="1"/>
<dbReference type="EMBL" id="CP000927">
    <property type="protein sequence ID" value="ABZ71946.1"/>
    <property type="molecule type" value="Genomic_DNA"/>
</dbReference>
<dbReference type="SMR" id="B0SZ35"/>
<dbReference type="STRING" id="366602.Caul_2819"/>
<dbReference type="KEGG" id="cak:Caul_2819"/>
<dbReference type="eggNOG" id="COG1007">
    <property type="taxonomic scope" value="Bacteria"/>
</dbReference>
<dbReference type="HOGENOM" id="CLU_007100_1_5_5"/>
<dbReference type="OrthoDB" id="9811718at2"/>
<dbReference type="GO" id="GO:0005886">
    <property type="term" value="C:plasma membrane"/>
    <property type="evidence" value="ECO:0007669"/>
    <property type="project" value="UniProtKB-SubCell"/>
</dbReference>
<dbReference type="GO" id="GO:0008137">
    <property type="term" value="F:NADH dehydrogenase (ubiquinone) activity"/>
    <property type="evidence" value="ECO:0007669"/>
    <property type="project" value="InterPro"/>
</dbReference>
<dbReference type="GO" id="GO:0050136">
    <property type="term" value="F:NADH:ubiquinone reductase (non-electrogenic) activity"/>
    <property type="evidence" value="ECO:0007669"/>
    <property type="project" value="UniProtKB-UniRule"/>
</dbReference>
<dbReference type="GO" id="GO:0048038">
    <property type="term" value="F:quinone binding"/>
    <property type="evidence" value="ECO:0007669"/>
    <property type="project" value="UniProtKB-KW"/>
</dbReference>
<dbReference type="GO" id="GO:0042773">
    <property type="term" value="P:ATP synthesis coupled electron transport"/>
    <property type="evidence" value="ECO:0007669"/>
    <property type="project" value="InterPro"/>
</dbReference>
<dbReference type="HAMAP" id="MF_00445">
    <property type="entry name" value="NDH1_NuoN_1"/>
    <property type="match status" value="1"/>
</dbReference>
<dbReference type="InterPro" id="IPR010096">
    <property type="entry name" value="NADH-Q_OxRdtase_suN/2"/>
</dbReference>
<dbReference type="InterPro" id="IPR001750">
    <property type="entry name" value="ND/Mrp_TM"/>
</dbReference>
<dbReference type="NCBIfam" id="TIGR01770">
    <property type="entry name" value="NDH_I_N"/>
    <property type="match status" value="1"/>
</dbReference>
<dbReference type="NCBIfam" id="NF004440">
    <property type="entry name" value="PRK05777.1-3"/>
    <property type="match status" value="1"/>
</dbReference>
<dbReference type="PANTHER" id="PTHR22773">
    <property type="entry name" value="NADH DEHYDROGENASE"/>
    <property type="match status" value="1"/>
</dbReference>
<dbReference type="Pfam" id="PF00361">
    <property type="entry name" value="Proton_antipo_M"/>
    <property type="match status" value="1"/>
</dbReference>
<sequence>MTFAANFSLVLPEVILGVSALVLLVWGAFQRKTSPLFTGAAVLALLGAAVAAVVGPHGHAFNGVYAADAAATYAKVAIYLSSAVAIVLGDRWLAVRGDQKFEYAVLVILAAVGMGVTASAGDLISLYIGVELQSLALYVLAAFRRDDAKSSEAGLKYFVLGALSSGLLLYGASLIYGFAGSTRFADIAAVGAAAAHGTHGVGLLFGLVFLICGLAFKVSAAPFHMWTPDVYEGAPTSVVGFFAAAPKLAAMMMFARVLGDAFPDSVAQWRQVLIIASLASVFVGAFAGLAQTNLKRLWAYSSIANVGYALLGVATGGETGLHSMLLFMTLYMVDVTGFFACLQALSRDGKPMETIEDMAGLVKERPGIAVAMTAFSLSALGMPPFSGFWAKFYVFGAAMGSGDVLLQWAAVLGLVGSVVAAFYYLRLIKAMWFDAPAGAVDKPQPTARAVGFAAALFSFPVVMVALIWLDPAARAAAAAFGHA</sequence>
<reference key="1">
    <citation type="submission" date="2008-01" db="EMBL/GenBank/DDBJ databases">
        <title>Complete sequence of chromosome of Caulobacter sp. K31.</title>
        <authorList>
            <consortium name="US DOE Joint Genome Institute"/>
            <person name="Copeland A."/>
            <person name="Lucas S."/>
            <person name="Lapidus A."/>
            <person name="Barry K."/>
            <person name="Glavina del Rio T."/>
            <person name="Dalin E."/>
            <person name="Tice H."/>
            <person name="Pitluck S."/>
            <person name="Bruce D."/>
            <person name="Goodwin L."/>
            <person name="Thompson L.S."/>
            <person name="Brettin T."/>
            <person name="Detter J.C."/>
            <person name="Han C."/>
            <person name="Schmutz J."/>
            <person name="Larimer F."/>
            <person name="Land M."/>
            <person name="Hauser L."/>
            <person name="Kyrpides N."/>
            <person name="Kim E."/>
            <person name="Stephens C."/>
            <person name="Richardson P."/>
        </authorList>
    </citation>
    <scope>NUCLEOTIDE SEQUENCE [LARGE SCALE GENOMIC DNA]</scope>
    <source>
        <strain>K31</strain>
    </source>
</reference>